<accession>Q29I03</accession>
<protein>
    <recommendedName>
        <fullName evidence="1">Tryptophan 2,3-dioxygenase</fullName>
        <shortName evidence="1">TDO</shortName>
        <ecNumber evidence="1">1.13.11.11</ecNumber>
    </recommendedName>
    <alternativeName>
        <fullName evidence="1">Protein vermilion</fullName>
    </alternativeName>
    <alternativeName>
        <fullName evidence="1">Tryptamin 2,3-dioxygenase</fullName>
    </alternativeName>
    <alternativeName>
        <fullName evidence="1">Tryptophan oxygenase</fullName>
        <shortName evidence="1">TO</shortName>
        <shortName evidence="1">TRPO</shortName>
    </alternativeName>
    <alternativeName>
        <fullName evidence="1">Tryptophan pyrrolase</fullName>
    </alternativeName>
    <alternativeName>
        <fullName evidence="1">Tryptophanase</fullName>
    </alternativeName>
</protein>
<keyword id="KW-0223">Dioxygenase</keyword>
<keyword id="KW-0349">Heme</keyword>
<keyword id="KW-0408">Iron</keyword>
<keyword id="KW-0479">Metal-binding</keyword>
<keyword id="KW-0560">Oxidoreductase</keyword>
<keyword id="KW-1185">Reference proteome</keyword>
<keyword id="KW-0823">Tryptophan catabolism</keyword>
<gene>
    <name evidence="1" type="primary">v</name>
    <name type="ORF">GA15272</name>
</gene>
<comment type="function">
    <text evidence="1">Heme-dependent dioxygenase that catalyzes the oxidative cleavage of the L-tryptophan (L-Trp) pyrrole ring and converts L-tryptophan to N-formyl-L-kynurenine. Catalyzes the oxidative cleavage of the indole moiety.</text>
</comment>
<comment type="catalytic activity">
    <reaction evidence="1">
        <text>L-tryptophan + O2 = N-formyl-L-kynurenine</text>
        <dbReference type="Rhea" id="RHEA:24536"/>
        <dbReference type="ChEBI" id="CHEBI:15379"/>
        <dbReference type="ChEBI" id="CHEBI:57912"/>
        <dbReference type="ChEBI" id="CHEBI:58629"/>
        <dbReference type="EC" id="1.13.11.11"/>
    </reaction>
</comment>
<comment type="cofactor">
    <cofactor evidence="1">
        <name>heme</name>
        <dbReference type="ChEBI" id="CHEBI:30413"/>
    </cofactor>
    <text evidence="1">Binds 1 heme group per subunit.</text>
</comment>
<comment type="pathway">
    <text evidence="1">Amino-acid degradation; L-tryptophan degradation via kynurenine pathway; L-kynurenine from L-tryptophan: step 1/2.</text>
</comment>
<comment type="pathway">
    <text evidence="1">Pigment biosynthesis; ommochrome biosynthesis.</text>
</comment>
<comment type="subunit">
    <text evidence="1">Homotetramer. Dimer of dimers.</text>
</comment>
<comment type="similarity">
    <text evidence="1">Belongs to the tryptophan 2,3-dioxygenase family.</text>
</comment>
<dbReference type="EC" id="1.13.11.11" evidence="1"/>
<dbReference type="EMBL" id="CH379064">
    <property type="protein sequence ID" value="EAL31603.1"/>
    <property type="molecule type" value="Genomic_DNA"/>
</dbReference>
<dbReference type="RefSeq" id="XP_001354550.1">
    <property type="nucleotide sequence ID" value="XM_001354514.3"/>
</dbReference>
<dbReference type="SMR" id="Q29I03"/>
<dbReference type="FunCoup" id="Q29I03">
    <property type="interactions" value="152"/>
</dbReference>
<dbReference type="STRING" id="46245.Q29I03"/>
<dbReference type="EnsemblMetazoa" id="FBtr0287106">
    <property type="protein sequence ID" value="FBpp0285544"/>
    <property type="gene ID" value="FBgn0075296"/>
</dbReference>
<dbReference type="GeneID" id="4814467"/>
<dbReference type="KEGG" id="dpo:4814467"/>
<dbReference type="CTD" id="32026"/>
<dbReference type="eggNOG" id="KOG3906">
    <property type="taxonomic scope" value="Eukaryota"/>
</dbReference>
<dbReference type="HOGENOM" id="CLU_045599_1_1_1"/>
<dbReference type="InParanoid" id="Q29I03"/>
<dbReference type="OMA" id="WRWRNDH"/>
<dbReference type="PhylomeDB" id="Q29I03"/>
<dbReference type="UniPathway" id="UPA00271"/>
<dbReference type="UniPathway" id="UPA00333">
    <property type="reaction ID" value="UER00453"/>
</dbReference>
<dbReference type="Proteomes" id="UP000001819">
    <property type="component" value="Chromosome X"/>
</dbReference>
<dbReference type="Bgee" id="FBgn0075296">
    <property type="expression patterns" value="Expressed in insect adult head and 1 other cell type or tissue"/>
</dbReference>
<dbReference type="GO" id="GO:0020037">
    <property type="term" value="F:heme binding"/>
    <property type="evidence" value="ECO:0000250"/>
    <property type="project" value="UniProtKB"/>
</dbReference>
<dbReference type="GO" id="GO:0046872">
    <property type="term" value="F:metal ion binding"/>
    <property type="evidence" value="ECO:0007669"/>
    <property type="project" value="UniProtKB-KW"/>
</dbReference>
<dbReference type="GO" id="GO:0004833">
    <property type="term" value="F:tryptophan 2,3-dioxygenase activity"/>
    <property type="evidence" value="ECO:0000250"/>
    <property type="project" value="UniProtKB"/>
</dbReference>
<dbReference type="GO" id="GO:0019442">
    <property type="term" value="P:L-tryptophan catabolic process to acetyl-CoA"/>
    <property type="evidence" value="ECO:0007669"/>
    <property type="project" value="TreeGrafter"/>
</dbReference>
<dbReference type="GO" id="GO:0019441">
    <property type="term" value="P:L-tryptophan catabolic process to kynurenine"/>
    <property type="evidence" value="ECO:0000250"/>
    <property type="project" value="UniProtKB"/>
</dbReference>
<dbReference type="GO" id="GO:0006727">
    <property type="term" value="P:ommochrome biosynthetic process"/>
    <property type="evidence" value="ECO:0007669"/>
    <property type="project" value="UniProtKB-UniRule"/>
</dbReference>
<dbReference type="FunFam" id="1.10.287.3810:FF:000001">
    <property type="entry name" value="Tryptophan 2,3-dioxygenase"/>
    <property type="match status" value="1"/>
</dbReference>
<dbReference type="Gene3D" id="1.10.287.3810">
    <property type="match status" value="1"/>
</dbReference>
<dbReference type="Gene3D" id="1.20.58.480">
    <property type="match status" value="1"/>
</dbReference>
<dbReference type="HAMAP" id="MF_01972">
    <property type="entry name" value="T23O"/>
    <property type="match status" value="1"/>
</dbReference>
<dbReference type="InterPro" id="IPR037217">
    <property type="entry name" value="Trp/Indoleamine_2_3_dOase-like"/>
</dbReference>
<dbReference type="InterPro" id="IPR004981">
    <property type="entry name" value="Trp_2_3_dOase"/>
</dbReference>
<dbReference type="PANTHER" id="PTHR10138">
    <property type="entry name" value="TRYPTOPHAN 2,3-DIOXYGENASE"/>
    <property type="match status" value="1"/>
</dbReference>
<dbReference type="PANTHER" id="PTHR10138:SF0">
    <property type="entry name" value="TRYPTOPHAN 2,3-DIOXYGENASE"/>
    <property type="match status" value="1"/>
</dbReference>
<dbReference type="Pfam" id="PF03301">
    <property type="entry name" value="Trp_dioxygenase"/>
    <property type="match status" value="1"/>
</dbReference>
<dbReference type="SUPFAM" id="SSF140959">
    <property type="entry name" value="Indolic compounds 2,3-dioxygenase-like"/>
    <property type="match status" value="1"/>
</dbReference>
<organism>
    <name type="scientific">Drosophila pseudoobscura pseudoobscura</name>
    <name type="common">Fruit fly</name>
    <dbReference type="NCBI Taxonomy" id="46245"/>
    <lineage>
        <taxon>Eukaryota</taxon>
        <taxon>Metazoa</taxon>
        <taxon>Ecdysozoa</taxon>
        <taxon>Arthropoda</taxon>
        <taxon>Hexapoda</taxon>
        <taxon>Insecta</taxon>
        <taxon>Pterygota</taxon>
        <taxon>Neoptera</taxon>
        <taxon>Endopterygota</taxon>
        <taxon>Diptera</taxon>
        <taxon>Brachycera</taxon>
        <taxon>Muscomorpha</taxon>
        <taxon>Ephydroidea</taxon>
        <taxon>Drosophilidae</taxon>
        <taxon>Drosophila</taxon>
        <taxon>Sophophora</taxon>
    </lineage>
</organism>
<evidence type="ECO:0000255" key="1">
    <source>
        <dbReference type="HAMAP-Rule" id="MF_03020"/>
    </source>
</evidence>
<name>T23O_DROPS</name>
<feature type="chain" id="PRO_0000360879" description="Tryptophan 2,3-dioxygenase">
    <location>
        <begin position="1"/>
        <end position="380"/>
    </location>
</feature>
<feature type="binding site" evidence="1">
    <location>
        <begin position="57"/>
        <end position="61"/>
    </location>
    <ligand>
        <name>substrate</name>
    </ligand>
</feature>
<feature type="binding site" evidence="1">
    <location>
        <position position="128"/>
    </location>
    <ligand>
        <name>substrate</name>
    </ligand>
</feature>
<feature type="binding site" description="axial binding residue" evidence="1">
    <location>
        <position position="313"/>
    </location>
    <ligand>
        <name>heme</name>
        <dbReference type="ChEBI" id="CHEBI:30413"/>
    </ligand>
    <ligandPart>
        <name>Fe</name>
        <dbReference type="ChEBI" id="CHEBI:18248"/>
    </ligandPart>
</feature>
<feature type="binding site" evidence="1">
    <location>
        <position position="328"/>
    </location>
    <ligand>
        <name>substrate</name>
    </ligand>
</feature>
<sequence>MSCPYAGNGNDHDDAAVPLSTEVGKIYGEYLMLDKLLDAQCMLSTEDKRPVHDEHLFIITHQAYELWFKQIIFEFDSIRDMLDAEVIDETKTLEIVKRLNRVVLILKLLVDQVPILETMTPLDFMDFRKYLAPASGFQSLQFRLIENKLGVLTEQRVRYNQKYSDVFGGDEQALSAIRSSEYEPSLLELVQRWLERTPGLEESGFNFWKKFQQSVDQFLAAQVEIAMEEPVEQAKNYRLMDIEKRREVYHSIFDPAVHEALVKRGDRRFSHRALQGAIMITFYRDEPRFSQPHQLLTLLMDIDSLITKWRYNHVIMVQRMIGSQQLGTGGSSGYQYLRSTLSDRYKVFLDLFNLSTFLIPREAIPPLDETIRKKLVHKSV</sequence>
<proteinExistence type="inferred from homology"/>
<reference key="1">
    <citation type="journal article" date="2005" name="Genome Res.">
        <title>Comparative genome sequencing of Drosophila pseudoobscura: chromosomal, gene, and cis-element evolution.</title>
        <authorList>
            <person name="Richards S."/>
            <person name="Liu Y."/>
            <person name="Bettencourt B.R."/>
            <person name="Hradecky P."/>
            <person name="Letovsky S."/>
            <person name="Nielsen R."/>
            <person name="Thornton K."/>
            <person name="Hubisz M.J."/>
            <person name="Chen R."/>
            <person name="Meisel R.P."/>
            <person name="Couronne O."/>
            <person name="Hua S."/>
            <person name="Smith M.A."/>
            <person name="Zhang P."/>
            <person name="Liu J."/>
            <person name="Bussemaker H.J."/>
            <person name="van Batenburg M.F."/>
            <person name="Howells S.L."/>
            <person name="Scherer S.E."/>
            <person name="Sodergren E."/>
            <person name="Matthews B.B."/>
            <person name="Crosby M.A."/>
            <person name="Schroeder A.J."/>
            <person name="Ortiz-Barrientos D."/>
            <person name="Rives C.M."/>
            <person name="Metzker M.L."/>
            <person name="Muzny D.M."/>
            <person name="Scott G."/>
            <person name="Steffen D."/>
            <person name="Wheeler D.A."/>
            <person name="Worley K.C."/>
            <person name="Havlak P."/>
            <person name="Durbin K.J."/>
            <person name="Egan A."/>
            <person name="Gill R."/>
            <person name="Hume J."/>
            <person name="Morgan M.B."/>
            <person name="Miner G."/>
            <person name="Hamilton C."/>
            <person name="Huang Y."/>
            <person name="Waldron L."/>
            <person name="Verduzco D."/>
            <person name="Clerc-Blankenburg K.P."/>
            <person name="Dubchak I."/>
            <person name="Noor M.A.F."/>
            <person name="Anderson W."/>
            <person name="White K.P."/>
            <person name="Clark A.G."/>
            <person name="Schaeffer S.W."/>
            <person name="Gelbart W.M."/>
            <person name="Weinstock G.M."/>
            <person name="Gibbs R.A."/>
        </authorList>
    </citation>
    <scope>NUCLEOTIDE SEQUENCE [LARGE SCALE GENOMIC DNA]</scope>
    <source>
        <strain>MV2-25 / Tucson 14011-0121.94</strain>
    </source>
</reference>